<feature type="chain" id="PRO_0000384320" description="Mitochondrial distribution and morphology protein 34">
    <location>
        <begin position="1"/>
        <end position="622"/>
    </location>
</feature>
<feature type="domain" description="SMP-LTD" evidence="1">
    <location>
        <begin position="1"/>
        <end position="195"/>
    </location>
</feature>
<feature type="region of interest" description="Disordered" evidence="2">
    <location>
        <begin position="211"/>
        <end position="234"/>
    </location>
</feature>
<feature type="region of interest" description="Disordered" evidence="2">
    <location>
        <begin position="303"/>
        <end position="322"/>
    </location>
</feature>
<feature type="region of interest" description="Disordered" evidence="2">
    <location>
        <begin position="355"/>
        <end position="432"/>
    </location>
</feature>
<feature type="region of interest" description="Disordered" evidence="2">
    <location>
        <begin position="445"/>
        <end position="464"/>
    </location>
</feature>
<feature type="region of interest" description="Disordered" evidence="2">
    <location>
        <begin position="482"/>
        <end position="546"/>
    </location>
</feature>
<feature type="region of interest" description="Disordered" evidence="2">
    <location>
        <begin position="581"/>
        <end position="622"/>
    </location>
</feature>
<feature type="compositionally biased region" description="Low complexity" evidence="2">
    <location>
        <begin position="214"/>
        <end position="225"/>
    </location>
</feature>
<feature type="compositionally biased region" description="Basic residues" evidence="2">
    <location>
        <begin position="360"/>
        <end position="372"/>
    </location>
</feature>
<feature type="compositionally biased region" description="Basic and acidic residues" evidence="2">
    <location>
        <begin position="373"/>
        <end position="384"/>
    </location>
</feature>
<feature type="compositionally biased region" description="Low complexity" evidence="2">
    <location>
        <begin position="388"/>
        <end position="404"/>
    </location>
</feature>
<feature type="compositionally biased region" description="Polar residues" evidence="2">
    <location>
        <begin position="482"/>
        <end position="495"/>
    </location>
</feature>
<feature type="compositionally biased region" description="Polar residues" evidence="2">
    <location>
        <begin position="522"/>
        <end position="532"/>
    </location>
</feature>
<feature type="compositionally biased region" description="Low complexity" evidence="2">
    <location>
        <begin position="533"/>
        <end position="543"/>
    </location>
</feature>
<feature type="compositionally biased region" description="Low complexity" evidence="2">
    <location>
        <begin position="592"/>
        <end position="601"/>
    </location>
</feature>
<comment type="function">
    <text evidence="1">Component of the ERMES/MDM complex, which serves as a molecular tether to connect the endoplasmic reticulum (ER) and mitochondria. Components of this complex are involved in the control of mitochondrial shape and protein biogenesis, and function in nonvesicular lipid trafficking between the ER and mitochondria. MDM34 is required for the interaction of the ER-resident membrane protein MMM1 and the outer mitochondrial membrane-resident beta-barrel protein MDM10.</text>
</comment>
<comment type="subunit">
    <text evidence="1">Component of the ER-mitochondria encounter structure (ERMES) or MDM complex, composed of MMM1, MDM10, MDM12 and MDM34.</text>
</comment>
<comment type="subcellular location">
    <subcellularLocation>
        <location evidence="1">Mitochondrion outer membrane</location>
        <topology evidence="1">Multi-pass membrane protein</topology>
    </subcellularLocation>
    <text evidence="1">The ERMES/MDM complex localizes to a few discrete foci (around 10 per single cell), that represent mitochondria-endoplasmic reticulum junctions. These foci are often found next to mtDNA nucleoids.</text>
</comment>
<comment type="domain">
    <text evidence="1">Lacks alpha-helical transmembrane segments, suggesting that it resides in the membrane via beta-sheet conformations similar to those predicted for other outer membrane proteins and porin.</text>
</comment>
<comment type="domain">
    <text evidence="1">The SMP-LTD domain is a barrel-like domain that can bind various types of glycerophospholipids in its interior and mediate their transfer between two adjacent bilayers.</text>
</comment>
<comment type="similarity">
    <text evidence="1">Belongs to the MDM34 family.</text>
</comment>
<name>MDM34_AJECG</name>
<accession>C0NY51</accession>
<sequence>MAFNFNWSPLMADAGFYTRAQELLTAALNKSPKPPIIVDDIVVTELNLGSNPPELEILEIGDLAEDRFRGIFKMSYAGDAFLTLKTCVQANPLNTYLLTRHPFASPQPLAAATGLTIPLQITLSDIKLSGFVILVFSKQKGITVVFRNDPLESLKVSSTFDSIPFVRDYLQKEIEGQLRILFMDELPAIIHRLSLRLWGTEYSELETTSAQVTNPPLEGPGLDPLLNPPEDPVDASGNVLSTSEIASLSLDSGVEMHSLFSRKNVLRLAALTDSQRTLSLFTPSIQEVVFRAWTGLMEQADGPSGLVSPMSPPLSRTHSHVATSSLSLQDAASLASSSHSRLSLPSTGFSGYGLSMGAGRHSKAHARKRKKRVVDLRRRPKNTDDMESVSGESEFTESTSAASVFSGSTIPEENNDDPVTPPGSPPRTIRQPTLCDRIVARNGAERNARRGIPAEFGHDIPASRTTLPTANDIARMLATTSSLQQQLHPANSKSLPPQVPPQEPALRPSLTSNSPYPIEKPNASNYTSSGDSQQQQQQQQQHQTHLPSSLIMEAAQSGGILEQAWMMKMASEIARRIQDEKMGGEDAAGSSNNKNDNKNNNTGGFWEQSLMRSHTPPPAYRH</sequence>
<keyword id="KW-0445">Lipid transport</keyword>
<keyword id="KW-0446">Lipid-binding</keyword>
<keyword id="KW-0472">Membrane</keyword>
<keyword id="KW-0496">Mitochondrion</keyword>
<keyword id="KW-1000">Mitochondrion outer membrane</keyword>
<keyword id="KW-1185">Reference proteome</keyword>
<keyword id="KW-0812">Transmembrane</keyword>
<keyword id="KW-1134">Transmembrane beta strand</keyword>
<keyword id="KW-0813">Transport</keyword>
<dbReference type="EMBL" id="GG663376">
    <property type="protein sequence ID" value="EEH03719.1"/>
    <property type="molecule type" value="Genomic_DNA"/>
</dbReference>
<dbReference type="SMR" id="C0NY51"/>
<dbReference type="STRING" id="447093.C0NY51"/>
<dbReference type="VEuPathDB" id="FungiDB:I7I50_04203"/>
<dbReference type="HOGENOM" id="CLU_036502_1_0_1"/>
<dbReference type="InParanoid" id="C0NY51"/>
<dbReference type="Proteomes" id="UP000001631">
    <property type="component" value="Unassembled WGS sequence"/>
</dbReference>
<dbReference type="GO" id="GO:0032865">
    <property type="term" value="C:ERMES complex"/>
    <property type="evidence" value="ECO:0007669"/>
    <property type="project" value="UniProtKB-UniRule"/>
</dbReference>
<dbReference type="GO" id="GO:0008289">
    <property type="term" value="F:lipid binding"/>
    <property type="evidence" value="ECO:0007669"/>
    <property type="project" value="UniProtKB-KW"/>
</dbReference>
<dbReference type="GO" id="GO:0000002">
    <property type="term" value="P:mitochondrial genome maintenance"/>
    <property type="evidence" value="ECO:0007669"/>
    <property type="project" value="UniProtKB-UniRule"/>
</dbReference>
<dbReference type="GO" id="GO:1990456">
    <property type="term" value="P:mitochondrion-endoplasmic reticulum membrane tethering"/>
    <property type="evidence" value="ECO:0007669"/>
    <property type="project" value="TreeGrafter"/>
</dbReference>
<dbReference type="GO" id="GO:0015914">
    <property type="term" value="P:phospholipid transport"/>
    <property type="evidence" value="ECO:0007669"/>
    <property type="project" value="TreeGrafter"/>
</dbReference>
<dbReference type="CDD" id="cd21673">
    <property type="entry name" value="SMP_Mdm34"/>
    <property type="match status" value="1"/>
</dbReference>
<dbReference type="HAMAP" id="MF_03105">
    <property type="entry name" value="Mdm34"/>
    <property type="match status" value="1"/>
</dbReference>
<dbReference type="InterPro" id="IPR027536">
    <property type="entry name" value="Mdm34"/>
</dbReference>
<dbReference type="InterPro" id="IPR031468">
    <property type="entry name" value="SMP_LBD"/>
</dbReference>
<dbReference type="PANTHER" id="PTHR28185">
    <property type="entry name" value="MITOCHONDRIAL DISTRIBUTION AND MORPHOLOGY PROTEIN 34"/>
    <property type="match status" value="1"/>
</dbReference>
<dbReference type="PANTHER" id="PTHR28185:SF1">
    <property type="entry name" value="MITOCHONDRIAL DISTRIBUTION AND MORPHOLOGY PROTEIN 34"/>
    <property type="match status" value="1"/>
</dbReference>
<dbReference type="PROSITE" id="PS51847">
    <property type="entry name" value="SMP"/>
    <property type="match status" value="1"/>
</dbReference>
<protein>
    <recommendedName>
        <fullName evidence="1">Mitochondrial distribution and morphology protein 34</fullName>
    </recommendedName>
</protein>
<proteinExistence type="inferred from homology"/>
<gene>
    <name evidence="1" type="primary">MDM34</name>
    <name type="ORF">HCBG_07845</name>
</gene>
<reference key="1">
    <citation type="submission" date="2009-02" db="EMBL/GenBank/DDBJ databases">
        <title>The genome sequence of Ajellomyces capsulatus strain G186AR.</title>
        <authorList>
            <person name="Champion M."/>
            <person name="Cuomo C.A."/>
            <person name="Ma L.-J."/>
            <person name="Henn M.R."/>
            <person name="Sil A."/>
            <person name="Goldman B."/>
            <person name="Young S.K."/>
            <person name="Kodira C.D."/>
            <person name="Zeng Q."/>
            <person name="Koehrsen M."/>
            <person name="Alvarado L."/>
            <person name="Berlin A."/>
            <person name="Borenstein D."/>
            <person name="Chen Z."/>
            <person name="Engels R."/>
            <person name="Freedman E."/>
            <person name="Gellesch M."/>
            <person name="Goldberg J."/>
            <person name="Griggs A."/>
            <person name="Gujja S."/>
            <person name="Heiman D."/>
            <person name="Hepburn T."/>
            <person name="Howarth C."/>
            <person name="Jen D."/>
            <person name="Larson L."/>
            <person name="Lewis B."/>
            <person name="Mehta T."/>
            <person name="Park D."/>
            <person name="Pearson M."/>
            <person name="Roberts A."/>
            <person name="Saif S."/>
            <person name="Shea T."/>
            <person name="Shenoy N."/>
            <person name="Sisk P."/>
            <person name="Stolte C."/>
            <person name="Sykes S."/>
            <person name="Walk T."/>
            <person name="White J."/>
            <person name="Yandava C."/>
            <person name="Klein B."/>
            <person name="McEwen J.G."/>
            <person name="Puccia R."/>
            <person name="Goldman G.H."/>
            <person name="Felipe M.S."/>
            <person name="Nino-Vega G."/>
            <person name="San-Blas G."/>
            <person name="Taylor J."/>
            <person name="Mendoza L."/>
            <person name="Galagan J.E."/>
            <person name="Nusbaum C."/>
            <person name="Birren B.W."/>
        </authorList>
    </citation>
    <scope>NUCLEOTIDE SEQUENCE [LARGE SCALE GENOMIC DNA]</scope>
    <source>
        <strain>G186AR / H82 / ATCC MYA-2454 / RMSCC 2432</strain>
    </source>
</reference>
<organism>
    <name type="scientific">Ajellomyces capsulatus (strain G186AR / H82 / ATCC MYA-2454 / RMSCC 2432)</name>
    <name type="common">Darling's disease fungus</name>
    <name type="synonym">Histoplasma capsulatum</name>
    <dbReference type="NCBI Taxonomy" id="447093"/>
    <lineage>
        <taxon>Eukaryota</taxon>
        <taxon>Fungi</taxon>
        <taxon>Dikarya</taxon>
        <taxon>Ascomycota</taxon>
        <taxon>Pezizomycotina</taxon>
        <taxon>Eurotiomycetes</taxon>
        <taxon>Eurotiomycetidae</taxon>
        <taxon>Onygenales</taxon>
        <taxon>Ajellomycetaceae</taxon>
        <taxon>Histoplasma</taxon>
    </lineage>
</organism>
<evidence type="ECO:0000255" key="1">
    <source>
        <dbReference type="HAMAP-Rule" id="MF_03105"/>
    </source>
</evidence>
<evidence type="ECO:0000256" key="2">
    <source>
        <dbReference type="SAM" id="MobiDB-lite"/>
    </source>
</evidence>